<feature type="chain" id="PRO_0000236041" description="Zinc finger protein 831">
    <location>
        <begin position="1"/>
        <end position="1677"/>
    </location>
</feature>
<feature type="zinc finger region" description="C2H2-type 1" evidence="2">
    <location>
        <begin position="144"/>
        <end position="166"/>
    </location>
</feature>
<feature type="zinc finger region" description="C2H2-type 2" evidence="2">
    <location>
        <begin position="172"/>
        <end position="196"/>
    </location>
</feature>
<feature type="region of interest" description="Disordered" evidence="3">
    <location>
        <begin position="1"/>
        <end position="43"/>
    </location>
</feature>
<feature type="region of interest" description="Disordered" evidence="3">
    <location>
        <begin position="193"/>
        <end position="250"/>
    </location>
</feature>
<feature type="region of interest" description="Disordered" evidence="3">
    <location>
        <begin position="270"/>
        <end position="398"/>
    </location>
</feature>
<feature type="region of interest" description="Disordered" evidence="3">
    <location>
        <begin position="516"/>
        <end position="557"/>
    </location>
</feature>
<feature type="region of interest" description="Disordered" evidence="3">
    <location>
        <begin position="663"/>
        <end position="931"/>
    </location>
</feature>
<feature type="region of interest" description="Disordered" evidence="3">
    <location>
        <begin position="950"/>
        <end position="1062"/>
    </location>
</feature>
<feature type="region of interest" description="Disordered" evidence="3">
    <location>
        <begin position="1100"/>
        <end position="1119"/>
    </location>
</feature>
<feature type="region of interest" description="Disordered" evidence="3">
    <location>
        <begin position="1137"/>
        <end position="1176"/>
    </location>
</feature>
<feature type="region of interest" description="Disordered" evidence="3">
    <location>
        <begin position="1216"/>
        <end position="1243"/>
    </location>
</feature>
<feature type="region of interest" description="Disordered" evidence="3">
    <location>
        <begin position="1510"/>
        <end position="1597"/>
    </location>
</feature>
<feature type="region of interest" description="Disordered" evidence="3">
    <location>
        <begin position="1620"/>
        <end position="1677"/>
    </location>
</feature>
<feature type="coiled-coil region" evidence="1">
    <location>
        <begin position="391"/>
        <end position="423"/>
    </location>
</feature>
<feature type="compositionally biased region" description="Pro residues" evidence="3">
    <location>
        <begin position="1"/>
        <end position="26"/>
    </location>
</feature>
<feature type="compositionally biased region" description="Basic and acidic residues" evidence="3">
    <location>
        <begin position="216"/>
        <end position="232"/>
    </location>
</feature>
<feature type="compositionally biased region" description="Basic and acidic residues" evidence="3">
    <location>
        <begin position="325"/>
        <end position="341"/>
    </location>
</feature>
<feature type="compositionally biased region" description="Gly residues" evidence="3">
    <location>
        <begin position="376"/>
        <end position="385"/>
    </location>
</feature>
<feature type="compositionally biased region" description="Basic and acidic residues" evidence="3">
    <location>
        <begin position="517"/>
        <end position="526"/>
    </location>
</feature>
<feature type="compositionally biased region" description="Basic and acidic residues" evidence="3">
    <location>
        <begin position="674"/>
        <end position="684"/>
    </location>
</feature>
<feature type="compositionally biased region" description="Basic and acidic residues" evidence="3">
    <location>
        <begin position="707"/>
        <end position="727"/>
    </location>
</feature>
<feature type="compositionally biased region" description="Basic and acidic residues" evidence="3">
    <location>
        <begin position="813"/>
        <end position="834"/>
    </location>
</feature>
<feature type="compositionally biased region" description="Low complexity" evidence="3">
    <location>
        <begin position="880"/>
        <end position="894"/>
    </location>
</feature>
<feature type="compositionally biased region" description="Low complexity" evidence="3">
    <location>
        <begin position="905"/>
        <end position="919"/>
    </location>
</feature>
<feature type="compositionally biased region" description="Low complexity" evidence="3">
    <location>
        <begin position="1153"/>
        <end position="1170"/>
    </location>
</feature>
<feature type="compositionally biased region" description="Polar residues" evidence="3">
    <location>
        <begin position="1518"/>
        <end position="1531"/>
    </location>
</feature>
<feature type="compositionally biased region" description="Basic and acidic residues" evidence="3">
    <location>
        <begin position="1649"/>
        <end position="1662"/>
    </location>
</feature>
<feature type="sequence variant" id="VAR_026472" description="In dbSNP:rs181984.">
    <original>G</original>
    <variation>R</variation>
    <location>
        <position position="845"/>
    </location>
</feature>
<feature type="sequence variant" id="VAR_026473" description="In dbSNP:rs259956.">
    <original>S</original>
    <variation>P</variation>
    <location>
        <position position="1513"/>
    </location>
</feature>
<feature type="sequence variant" id="VAR_069367" description="In dbSNP:rs201549554." evidence="4">
    <original>R</original>
    <variation>H</variation>
    <location>
        <position position="1615"/>
    </location>
</feature>
<protein>
    <recommendedName>
        <fullName>Zinc finger protein 831</fullName>
    </recommendedName>
</protein>
<name>ZN831_HUMAN</name>
<sequence>MEVPEPTCPAPPARDQPAPTPGPPGAPGGQASPHLTLGPVLLPPEQGLAPPTVFLKALPIPLYHTVPPGGLQPRAPLVTGSLDGGNVPFILSPVLQPEGPGPTQVGKPAAPTLTVNIVGTLPVLSPGLGPTLGSPGKVRNAGKYLCPHCGRDCLKPSVLEKHIRSHTGERPFPCATCGIAFKTQSNLYKHRRTQTHLNNSRLSSESEGAGGGLLEEGDKAGEPPRPEGRGESRCQGMHEGASERPLSPGAHVPLLAKNLDVRTEAAPCPGSAFADREAPWDSAPMASPGLPAASTQPWRKLPEQKSPTAGKPCALQRQQATAAEKPWDAKAPEGRLRKCESTDSGYLSRSDSAEQPHAPCSPLHSLSEHSAESEGEGGPGPGPGVAGAEPGAREAGLELEKKRLEERIAQLISHNQAVVDDAQLDNVRPRKTGLSKQGSIDLPTPYTYKDSFHFDIRALEPGRRRAPGPVRSTWTPPDKSRPLFFHSVPTQLSTTVECVPVTRSNSLPFVEGSRTWLEPREPRDPWSRTQKPLSPRPGPARLGCRSGLSSTDVPSGHPRALVRQAAVEDLPGTPIGDALVPAEDTDAKRTAAREAMAGKGRAGGRKCGQRRLKMFSQEKWQVYGDETFKRIYQKMKASPHGGKKAREVGMGSGAELGFPLQKEAAGSSGTVPTQDRRTPVHEDISAGATPEPWGNPPALEASLVTEPTKHGETVARRGDSDRPRVEEAVSSPALGGRDSPCSGSRSPLVSPNGRLELGWQMPPAPGPLKGGDVEAPRPVWPDPKLEGGARGVGDVQETCLWAQTVLRWPSRGSGEDKLPSERKKLKVEDLHSWKQPEPVSAETPGGPTQPASLSSQKQDADPGEVPGGSKESARQVGEPLESSGASLAAASVALKRVGPRDKATPLHPAAPAPAEHPSLATPPQAPRVLSALADNAFSPKYLLRLPQAETPLPLPIPWGPRHSQDSLCSSGWPEERASFVGSGLGTPLSPSPASGPSPGEADSILEDPSCSRPQDGRKGAQLGGDKGDRMATSRPAARELPISAPGAPREATSSPPTPTCEAHLVQDMEGDSHRIHRLCMGSTLARARLSGDVLNPWVPNWELGEPPGNAPEDPSSGPLVGPDPCSPLQPGSFLTALTRPQGVPPGWPELALSSHSGTSRSHSTRSPHSTQNPFPSLKAEPRLTWCCLSRSVPLPAEQKAKAASVYLAVHFPGSSLRDEGPNGPPGSNGGWTWTSPGEGGPAQMSKFSYPTVPGVMPQHQVSEPEWKKGLPWRAKMSRGNSKQRKLKINPKRYKGNFLQSCVQLRASRLRTPTWVRRRSRHPPALEGLKPCRTPGQTSSEIAGLNLQEEPSCATSESPPCCGKEEKKEGDCRQTLGTLSLGTSSRIVREMDKRTVKDISPSAGEHGDCTTHSTAATSGLSLQSDTCLAVVNDVPLPPGKGLDLGLLETQLLASQDSVSTDPKPYIFSDAQRPSSFGSKGTFPHHDIATSVAAVCISLPVRTDHIAQEIHSAESRDHSQTAGRTLTSSSPDSKVTEEGRAQTLLPGRPSSGQRISDSVPLESTEKTHLEIPASGPSSASSHHKEGRHKTFFPSRGQYGCGEMTVPCPSLGSDGRKRQVSGLITRKDSVVPSKPEQPIEIPEAPSKSLKKRSLEGMRKQTRVEFSDTSSDDEDRLVIEI</sequence>
<evidence type="ECO:0000255" key="1"/>
<evidence type="ECO:0000255" key="2">
    <source>
        <dbReference type="PROSITE-ProRule" id="PRU00042"/>
    </source>
</evidence>
<evidence type="ECO:0000256" key="3">
    <source>
        <dbReference type="SAM" id="MobiDB-lite"/>
    </source>
</evidence>
<evidence type="ECO:0000269" key="4">
    <source>
    </source>
</evidence>
<evidence type="ECO:0000305" key="5"/>
<keyword id="KW-0002">3D-structure</keyword>
<keyword id="KW-0175">Coiled coil</keyword>
<keyword id="KW-0479">Metal-binding</keyword>
<keyword id="KW-1267">Proteomics identification</keyword>
<keyword id="KW-1185">Reference proteome</keyword>
<keyword id="KW-0677">Repeat</keyword>
<keyword id="KW-0862">Zinc</keyword>
<keyword id="KW-0863">Zinc-finger</keyword>
<reference key="1">
    <citation type="journal article" date="2001" name="Nature">
        <title>The DNA sequence and comparative analysis of human chromosome 20.</title>
        <authorList>
            <person name="Deloukas P."/>
            <person name="Matthews L.H."/>
            <person name="Ashurst J.L."/>
            <person name="Burton J."/>
            <person name="Gilbert J.G.R."/>
            <person name="Jones M."/>
            <person name="Stavrides G."/>
            <person name="Almeida J.P."/>
            <person name="Babbage A.K."/>
            <person name="Bagguley C.L."/>
            <person name="Bailey J."/>
            <person name="Barlow K.F."/>
            <person name="Bates K.N."/>
            <person name="Beard L.M."/>
            <person name="Beare D.M."/>
            <person name="Beasley O.P."/>
            <person name="Bird C.P."/>
            <person name="Blakey S.E."/>
            <person name="Bridgeman A.M."/>
            <person name="Brown A.J."/>
            <person name="Buck D."/>
            <person name="Burrill W.D."/>
            <person name="Butler A.P."/>
            <person name="Carder C."/>
            <person name="Carter N.P."/>
            <person name="Chapman J.C."/>
            <person name="Clamp M."/>
            <person name="Clark G."/>
            <person name="Clark L.N."/>
            <person name="Clark S.Y."/>
            <person name="Clee C.M."/>
            <person name="Clegg S."/>
            <person name="Cobley V.E."/>
            <person name="Collier R.E."/>
            <person name="Connor R.E."/>
            <person name="Corby N.R."/>
            <person name="Coulson A."/>
            <person name="Coville G.J."/>
            <person name="Deadman R."/>
            <person name="Dhami P.D."/>
            <person name="Dunn M."/>
            <person name="Ellington A.G."/>
            <person name="Frankland J.A."/>
            <person name="Fraser A."/>
            <person name="French L."/>
            <person name="Garner P."/>
            <person name="Grafham D.V."/>
            <person name="Griffiths C."/>
            <person name="Griffiths M.N.D."/>
            <person name="Gwilliam R."/>
            <person name="Hall R.E."/>
            <person name="Hammond S."/>
            <person name="Harley J.L."/>
            <person name="Heath P.D."/>
            <person name="Ho S."/>
            <person name="Holden J.L."/>
            <person name="Howden P.J."/>
            <person name="Huckle E."/>
            <person name="Hunt A.R."/>
            <person name="Hunt S.E."/>
            <person name="Jekosch K."/>
            <person name="Johnson C.M."/>
            <person name="Johnson D."/>
            <person name="Kay M.P."/>
            <person name="Kimberley A.M."/>
            <person name="King A."/>
            <person name="Knights A."/>
            <person name="Laird G.K."/>
            <person name="Lawlor S."/>
            <person name="Lehvaeslaiho M.H."/>
            <person name="Leversha M.A."/>
            <person name="Lloyd C."/>
            <person name="Lloyd D.M."/>
            <person name="Lovell J.D."/>
            <person name="Marsh V.L."/>
            <person name="Martin S.L."/>
            <person name="McConnachie L.J."/>
            <person name="McLay K."/>
            <person name="McMurray A.A."/>
            <person name="Milne S.A."/>
            <person name="Mistry D."/>
            <person name="Moore M.J.F."/>
            <person name="Mullikin J.C."/>
            <person name="Nickerson T."/>
            <person name="Oliver K."/>
            <person name="Parker A."/>
            <person name="Patel R."/>
            <person name="Pearce T.A.V."/>
            <person name="Peck A.I."/>
            <person name="Phillimore B.J.C.T."/>
            <person name="Prathalingam S.R."/>
            <person name="Plumb R.W."/>
            <person name="Ramsay H."/>
            <person name="Rice C.M."/>
            <person name="Ross M.T."/>
            <person name="Scott C.E."/>
            <person name="Sehra H.K."/>
            <person name="Shownkeen R."/>
            <person name="Sims S."/>
            <person name="Skuce C.D."/>
            <person name="Smith M.L."/>
            <person name="Soderlund C."/>
            <person name="Steward C.A."/>
            <person name="Sulston J.E."/>
            <person name="Swann R.M."/>
            <person name="Sycamore N."/>
            <person name="Taylor R."/>
            <person name="Tee L."/>
            <person name="Thomas D.W."/>
            <person name="Thorpe A."/>
            <person name="Tracey A."/>
            <person name="Tromans A.C."/>
            <person name="Vaudin M."/>
            <person name="Wall M."/>
            <person name="Wallis J.M."/>
            <person name="Whitehead S.L."/>
            <person name="Whittaker P."/>
            <person name="Willey D.L."/>
            <person name="Williams L."/>
            <person name="Williams S.A."/>
            <person name="Wilming L."/>
            <person name="Wray P.W."/>
            <person name="Hubbard T."/>
            <person name="Durbin R.M."/>
            <person name="Bentley D.R."/>
            <person name="Beck S."/>
            <person name="Rogers J."/>
        </authorList>
    </citation>
    <scope>NUCLEOTIDE SEQUENCE [LARGE SCALE GENOMIC DNA]</scope>
</reference>
<reference key="2">
    <citation type="journal article" date="2007" name="BMC Genomics">
        <title>The full-ORF clone resource of the German cDNA consortium.</title>
        <authorList>
            <person name="Bechtel S."/>
            <person name="Rosenfelder H."/>
            <person name="Duda A."/>
            <person name="Schmidt C.P."/>
            <person name="Ernst U."/>
            <person name="Wellenreuther R."/>
            <person name="Mehrle A."/>
            <person name="Schuster C."/>
            <person name="Bahr A."/>
            <person name="Bloecker H."/>
            <person name="Heubner D."/>
            <person name="Hoerlein A."/>
            <person name="Michel G."/>
            <person name="Wedler H."/>
            <person name="Koehrer K."/>
            <person name="Ottenwaelder B."/>
            <person name="Poustka A."/>
            <person name="Wiemann S."/>
            <person name="Schupp I."/>
        </authorList>
    </citation>
    <scope>NUCLEOTIDE SEQUENCE [LARGE SCALE MRNA] OF 379-1677</scope>
    <source>
        <tissue>Lymph node</tissue>
    </source>
</reference>
<reference key="3">
    <citation type="journal article" date="2012" name="N. Engl. J. Med.">
        <title>Diagnostic exome sequencing in persons with severe intellectual disability.</title>
        <authorList>
            <person name="de Ligt J."/>
            <person name="Willemsen M.H."/>
            <person name="van Bon B.W."/>
            <person name="Kleefstra T."/>
            <person name="Yntema H.G."/>
            <person name="Kroes T."/>
            <person name="Vulto-van Silfhout A.T."/>
            <person name="Koolen D.A."/>
            <person name="de Vries P."/>
            <person name="Gilissen C."/>
            <person name="del Rosario M."/>
            <person name="Hoischen A."/>
            <person name="Scheffer H."/>
            <person name="de Vries B.B."/>
            <person name="Brunner H.G."/>
            <person name="Veltman J.A."/>
            <person name="Vissers L.E."/>
        </authorList>
    </citation>
    <scope>VARIANT HIS-1615</scope>
</reference>
<dbReference type="EMBL" id="AL121919">
    <property type="status" value="NOT_ANNOTATED_CDS"/>
    <property type="molecule type" value="Genomic_DNA"/>
</dbReference>
<dbReference type="EMBL" id="AL713683">
    <property type="protein sequence ID" value="CAD28487.1"/>
    <property type="molecule type" value="mRNA"/>
</dbReference>
<dbReference type="EMBL" id="AL833682">
    <property type="protein sequence ID" value="CAI46154.1"/>
    <property type="status" value="ALT_INIT"/>
    <property type="molecule type" value="mRNA"/>
</dbReference>
<dbReference type="CCDS" id="CCDS42894.1"/>
<dbReference type="RefSeq" id="NP_001371283.1">
    <property type="nucleotide sequence ID" value="NM_001384354.1"/>
</dbReference>
<dbReference type="RefSeq" id="NP_848552.1">
    <property type="nucleotide sequence ID" value="NM_178457.3"/>
</dbReference>
<dbReference type="RefSeq" id="XP_005260329.1">
    <property type="nucleotide sequence ID" value="XM_005260272.3"/>
</dbReference>
<dbReference type="RefSeq" id="XP_005260330.1">
    <property type="nucleotide sequence ID" value="XM_005260273.4"/>
</dbReference>
<dbReference type="RefSeq" id="XP_006723761.1">
    <property type="nucleotide sequence ID" value="XM_006723698.4"/>
</dbReference>
<dbReference type="RefSeq" id="XP_011526836.1">
    <property type="nucleotide sequence ID" value="XM_011528534.3"/>
</dbReference>
<dbReference type="RefSeq" id="XP_011526838.1">
    <property type="nucleotide sequence ID" value="XM_011528536.3"/>
</dbReference>
<dbReference type="RefSeq" id="XP_011526839.1">
    <property type="nucleotide sequence ID" value="XM_011528537.3"/>
</dbReference>
<dbReference type="RefSeq" id="XP_011526840.1">
    <property type="nucleotide sequence ID" value="XM_011528538.3"/>
</dbReference>
<dbReference type="RefSeq" id="XP_016883131.1">
    <property type="nucleotide sequence ID" value="XM_017027642.1"/>
</dbReference>
<dbReference type="RefSeq" id="XP_016883132.1">
    <property type="nucleotide sequence ID" value="XM_017027643.1"/>
</dbReference>
<dbReference type="RefSeq" id="XP_016883133.1">
    <property type="nucleotide sequence ID" value="XM_017027644.1"/>
</dbReference>
<dbReference type="RefSeq" id="XP_047295836.1">
    <property type="nucleotide sequence ID" value="XM_047439880.1"/>
</dbReference>
<dbReference type="RefSeq" id="XP_047295837.1">
    <property type="nucleotide sequence ID" value="XM_047439881.1"/>
</dbReference>
<dbReference type="RefSeq" id="XP_047295838.1">
    <property type="nucleotide sequence ID" value="XM_047439882.1"/>
</dbReference>
<dbReference type="PDB" id="8FUF">
    <property type="method" value="X-ray"/>
    <property type="resolution" value="3.69 A"/>
    <property type="chains" value="B/D/F/H=935-947"/>
</dbReference>
<dbReference type="PDBsum" id="8FUF"/>
<dbReference type="SMR" id="Q5JPB2"/>
<dbReference type="BioGRID" id="126136">
    <property type="interactions" value="6"/>
</dbReference>
<dbReference type="FunCoup" id="Q5JPB2">
    <property type="interactions" value="270"/>
</dbReference>
<dbReference type="IntAct" id="Q5JPB2">
    <property type="interactions" value="1"/>
</dbReference>
<dbReference type="STRING" id="9606.ENSP00000490240"/>
<dbReference type="GlyCosmos" id="Q5JPB2">
    <property type="glycosylation" value="1 site, 1 glycan"/>
</dbReference>
<dbReference type="GlyGen" id="Q5JPB2">
    <property type="glycosylation" value="10 sites, 1 O-linked glycan (4 sites)"/>
</dbReference>
<dbReference type="iPTMnet" id="Q5JPB2"/>
<dbReference type="PhosphoSitePlus" id="Q5JPB2"/>
<dbReference type="BioMuta" id="ZNF831"/>
<dbReference type="DMDM" id="160370001"/>
<dbReference type="jPOST" id="Q5JPB2"/>
<dbReference type="MassIVE" id="Q5JPB2"/>
<dbReference type="PaxDb" id="9606-ENSP00000360069"/>
<dbReference type="PeptideAtlas" id="Q5JPB2"/>
<dbReference type="ProteomicsDB" id="63006"/>
<dbReference type="Antibodypedia" id="5844">
    <property type="antibodies" value="8 antibodies from 7 providers"/>
</dbReference>
<dbReference type="Ensembl" id="ENST00000371030.4">
    <property type="protein sequence ID" value="ENSP00000360069.2"/>
    <property type="gene ID" value="ENSG00000124203.7"/>
</dbReference>
<dbReference type="Ensembl" id="ENST00000637017.1">
    <property type="protein sequence ID" value="ENSP00000490240.1"/>
    <property type="gene ID" value="ENSG00000124203.7"/>
</dbReference>
<dbReference type="GeneID" id="128611"/>
<dbReference type="KEGG" id="hsa:128611"/>
<dbReference type="MANE-Select" id="ENST00000371030.4">
    <property type="protein sequence ID" value="ENSP00000360069.2"/>
    <property type="RefSeq nucleotide sequence ID" value="NM_178457.3"/>
    <property type="RefSeq protein sequence ID" value="NP_848552.1"/>
</dbReference>
<dbReference type="UCSC" id="uc002yan.4">
    <property type="organism name" value="human"/>
</dbReference>
<dbReference type="AGR" id="HGNC:16167"/>
<dbReference type="CTD" id="128611"/>
<dbReference type="DisGeNET" id="128611"/>
<dbReference type="GeneCards" id="ZNF831"/>
<dbReference type="HGNC" id="HGNC:16167">
    <property type="gene designation" value="ZNF831"/>
</dbReference>
<dbReference type="HPA" id="ENSG00000124203">
    <property type="expression patterns" value="Tissue enhanced (lymphoid)"/>
</dbReference>
<dbReference type="neXtProt" id="NX_Q5JPB2"/>
<dbReference type="OpenTargets" id="ENSG00000124203"/>
<dbReference type="PharmGKB" id="PA162410774"/>
<dbReference type="VEuPathDB" id="HostDB:ENSG00000124203"/>
<dbReference type="eggNOG" id="KOG1721">
    <property type="taxonomic scope" value="Eukaryota"/>
</dbReference>
<dbReference type="GeneTree" id="ENSGT00940000161664"/>
<dbReference type="HOGENOM" id="CLU_243145_0_0_1"/>
<dbReference type="InParanoid" id="Q5JPB2"/>
<dbReference type="OMA" id="MSQHQVS"/>
<dbReference type="OrthoDB" id="6077919at2759"/>
<dbReference type="PAN-GO" id="Q5JPB2">
    <property type="GO annotations" value="0 GO annotations based on evolutionary models"/>
</dbReference>
<dbReference type="PhylomeDB" id="Q5JPB2"/>
<dbReference type="TreeFam" id="TF338213"/>
<dbReference type="PathwayCommons" id="Q5JPB2"/>
<dbReference type="BioGRID-ORCS" id="128611">
    <property type="hits" value="11 hits in 1164 CRISPR screens"/>
</dbReference>
<dbReference type="ChiTaRS" id="ZNF831">
    <property type="organism name" value="human"/>
</dbReference>
<dbReference type="GenomeRNAi" id="128611"/>
<dbReference type="Pharos" id="Q5JPB2">
    <property type="development level" value="Tdark"/>
</dbReference>
<dbReference type="PRO" id="PR:Q5JPB2"/>
<dbReference type="Proteomes" id="UP000005640">
    <property type="component" value="Chromosome 20"/>
</dbReference>
<dbReference type="RNAct" id="Q5JPB2">
    <property type="molecule type" value="protein"/>
</dbReference>
<dbReference type="Bgee" id="ENSG00000124203">
    <property type="expression patterns" value="Expressed in granulocyte and 82 other cell types or tissues"/>
</dbReference>
<dbReference type="GO" id="GO:0008270">
    <property type="term" value="F:zinc ion binding"/>
    <property type="evidence" value="ECO:0007669"/>
    <property type="project" value="UniProtKB-KW"/>
</dbReference>
<dbReference type="FunFam" id="3.30.160.60:FF:000710">
    <property type="entry name" value="Zinc finger protein 768"/>
    <property type="match status" value="1"/>
</dbReference>
<dbReference type="Gene3D" id="3.30.160.60">
    <property type="entry name" value="Classic Zinc Finger"/>
    <property type="match status" value="2"/>
</dbReference>
<dbReference type="InterPro" id="IPR036236">
    <property type="entry name" value="Znf_C2H2_sf"/>
</dbReference>
<dbReference type="InterPro" id="IPR013087">
    <property type="entry name" value="Znf_C2H2_type"/>
</dbReference>
<dbReference type="PANTHER" id="PTHR47166">
    <property type="entry name" value="ZINC FINGER PROTEIN 831"/>
    <property type="match status" value="1"/>
</dbReference>
<dbReference type="PANTHER" id="PTHR47166:SF1">
    <property type="entry name" value="ZINC FINGER PROTEIN 831"/>
    <property type="match status" value="1"/>
</dbReference>
<dbReference type="Pfam" id="PF00096">
    <property type="entry name" value="zf-C2H2"/>
    <property type="match status" value="1"/>
</dbReference>
<dbReference type="SMART" id="SM00355">
    <property type="entry name" value="ZnF_C2H2"/>
    <property type="match status" value="2"/>
</dbReference>
<dbReference type="SUPFAM" id="SSF57667">
    <property type="entry name" value="beta-beta-alpha zinc fingers"/>
    <property type="match status" value="1"/>
</dbReference>
<dbReference type="PROSITE" id="PS00028">
    <property type="entry name" value="ZINC_FINGER_C2H2_1"/>
    <property type="match status" value="2"/>
</dbReference>
<dbReference type="PROSITE" id="PS50157">
    <property type="entry name" value="ZINC_FINGER_C2H2_2"/>
    <property type="match status" value="2"/>
</dbReference>
<proteinExistence type="evidence at protein level"/>
<accession>Q5JPB2</accession>
<accession>Q5TDR4</accession>
<accession>Q8TCP0</accession>
<organism>
    <name type="scientific">Homo sapiens</name>
    <name type="common">Human</name>
    <dbReference type="NCBI Taxonomy" id="9606"/>
    <lineage>
        <taxon>Eukaryota</taxon>
        <taxon>Metazoa</taxon>
        <taxon>Chordata</taxon>
        <taxon>Craniata</taxon>
        <taxon>Vertebrata</taxon>
        <taxon>Euteleostomi</taxon>
        <taxon>Mammalia</taxon>
        <taxon>Eutheria</taxon>
        <taxon>Euarchontoglires</taxon>
        <taxon>Primates</taxon>
        <taxon>Haplorrhini</taxon>
        <taxon>Catarrhini</taxon>
        <taxon>Hominidae</taxon>
        <taxon>Homo</taxon>
    </lineage>
</organism>
<comment type="sequence caution" evidence="5">
    <conflict type="erroneous initiation">
        <sequence resource="EMBL-CDS" id="CAI46154"/>
    </conflict>
</comment>
<gene>
    <name type="primary">ZNF831</name>
    <name type="synonym">C20orf174</name>
</gene>